<accession>A4SYW3</accession>
<reference key="1">
    <citation type="journal article" date="2012" name="Stand. Genomic Sci.">
        <title>Complete genome sequence of Polynucleobacter necessarius subsp. asymbioticus type strain (QLW-P1DMWA-1(T)).</title>
        <authorList>
            <person name="Meincke L."/>
            <person name="Copeland A."/>
            <person name="Lapidus A."/>
            <person name="Lucas S."/>
            <person name="Berry K.W."/>
            <person name="Del Rio T.G."/>
            <person name="Hammon N."/>
            <person name="Dalin E."/>
            <person name="Tice H."/>
            <person name="Pitluck S."/>
            <person name="Richardson P."/>
            <person name="Bruce D."/>
            <person name="Goodwin L."/>
            <person name="Han C."/>
            <person name="Tapia R."/>
            <person name="Detter J.C."/>
            <person name="Schmutz J."/>
            <person name="Brettin T."/>
            <person name="Larimer F."/>
            <person name="Land M."/>
            <person name="Hauser L."/>
            <person name="Kyrpides N.C."/>
            <person name="Ivanova N."/>
            <person name="Goker M."/>
            <person name="Woyke T."/>
            <person name="Wu Q.L."/>
            <person name="Pockl M."/>
            <person name="Hahn M.W."/>
            <person name="Klenk H.P."/>
        </authorList>
    </citation>
    <scope>NUCLEOTIDE SEQUENCE [LARGE SCALE GENOMIC DNA]</scope>
    <source>
        <strain>DSM 18221 / CIP 109841 / QLW-P1DMWA-1</strain>
    </source>
</reference>
<evidence type="ECO:0000255" key="1">
    <source>
        <dbReference type="HAMAP-Rule" id="MF_01522"/>
    </source>
</evidence>
<sequence length="647" mass="71899">MSVSNPEFSESSILRPVEISRQTHPHKKGASIALMFAAIGIVFGDIGTSPLYALKECFSPDHGIPFSADAVYGVISMVFWAFAIVVSLKYVLFVMRANNHGEGGILALMALALRTAPNGSKRSLLIIMAGVFGACMFYGDAIITPAISVLSAVEGLEVISSDLTRFVLPITVLILVILFFIQKTGTEVVGKLFGPIMMVWFITIGLMGLHQVIQNPAIFAAVNPMFAIRFLIEHSLQGFIVLGAVFLVLTGAEALYADMGHFGIRPIRMGWFFIVMPCLLLNYFGQGAMFLANPETISNPFFLMVPEVFVFPLVILATAATVIASQAVISGAFSMTSQAILLGFVPRMKVRHTSDREIGQIYMPFVNWTLLFLVIVVVLAFKKSENLAAAYGIAVTTTMIVTTLLAAIVMRVVWRWNTILVTLVIGAFLTVDLAFLTANLLKIMEGGWFPLLLGAICFLFLMTWYQGRKLLRQNAVNNGIELKGFIDALMQHPPHRVEGTALFLTAHVDYVPVSFLHNLKHNHVLHERVFFLKVSIWDVPYVKDEERITLRDMGNGIYVVRAVYGFNETPDMGQIIELIEKSADLKFDMMNTSFFLSRDTIVSTEIPGMAMWRERLFCWMYQNAGRQSDFFKIPANRLVELGAKVEI</sequence>
<organism>
    <name type="scientific">Polynucleobacter asymbioticus (strain DSM 18221 / CIP 109841 / QLW-P1DMWA-1)</name>
    <name type="common">Polynucleobacter necessarius subsp. asymbioticus</name>
    <dbReference type="NCBI Taxonomy" id="312153"/>
    <lineage>
        <taxon>Bacteria</taxon>
        <taxon>Pseudomonadati</taxon>
        <taxon>Pseudomonadota</taxon>
        <taxon>Betaproteobacteria</taxon>
        <taxon>Burkholderiales</taxon>
        <taxon>Burkholderiaceae</taxon>
        <taxon>Polynucleobacter</taxon>
    </lineage>
</organism>
<proteinExistence type="inferred from homology"/>
<protein>
    <recommendedName>
        <fullName evidence="1">Probable potassium transport system protein Kup</fullName>
    </recommendedName>
</protein>
<gene>
    <name evidence="1" type="primary">kup</name>
    <name type="ordered locus">Pnuc_1463</name>
</gene>
<name>KUP_POLAQ</name>
<keyword id="KW-0997">Cell inner membrane</keyword>
<keyword id="KW-1003">Cell membrane</keyword>
<keyword id="KW-0406">Ion transport</keyword>
<keyword id="KW-0472">Membrane</keyword>
<keyword id="KW-0630">Potassium</keyword>
<keyword id="KW-0633">Potassium transport</keyword>
<keyword id="KW-1185">Reference proteome</keyword>
<keyword id="KW-0769">Symport</keyword>
<keyword id="KW-0812">Transmembrane</keyword>
<keyword id="KW-1133">Transmembrane helix</keyword>
<keyword id="KW-0813">Transport</keyword>
<feature type="chain" id="PRO_0000333309" description="Probable potassium transport system protein Kup">
    <location>
        <begin position="1"/>
        <end position="647"/>
    </location>
</feature>
<feature type="transmembrane region" description="Helical" evidence="1">
    <location>
        <begin position="32"/>
        <end position="52"/>
    </location>
</feature>
<feature type="transmembrane region" description="Helical" evidence="1">
    <location>
        <begin position="74"/>
        <end position="94"/>
    </location>
</feature>
<feature type="transmembrane region" description="Helical" evidence="1">
    <location>
        <begin position="124"/>
        <end position="144"/>
    </location>
</feature>
<feature type="transmembrane region" description="Helical" evidence="1">
    <location>
        <begin position="166"/>
        <end position="186"/>
    </location>
</feature>
<feature type="transmembrane region" description="Helical" evidence="1">
    <location>
        <begin position="193"/>
        <end position="213"/>
    </location>
</feature>
<feature type="transmembrane region" description="Helical" evidence="1">
    <location>
        <begin position="230"/>
        <end position="250"/>
    </location>
</feature>
<feature type="transmembrane region" description="Helical" evidence="1">
    <location>
        <begin position="271"/>
        <end position="291"/>
    </location>
</feature>
<feature type="transmembrane region" description="Helical" evidence="1">
    <location>
        <begin position="300"/>
        <end position="320"/>
    </location>
</feature>
<feature type="transmembrane region" description="Helical" evidence="1">
    <location>
        <begin position="322"/>
        <end position="342"/>
    </location>
</feature>
<feature type="transmembrane region" description="Helical" evidence="1">
    <location>
        <begin position="361"/>
        <end position="381"/>
    </location>
</feature>
<feature type="transmembrane region" description="Helical" evidence="1">
    <location>
        <begin position="390"/>
        <end position="410"/>
    </location>
</feature>
<feature type="transmembrane region" description="Helical" evidence="1">
    <location>
        <begin position="418"/>
        <end position="438"/>
    </location>
</feature>
<feature type="transmembrane region" description="Helical" evidence="1">
    <location>
        <begin position="443"/>
        <end position="463"/>
    </location>
</feature>
<dbReference type="EMBL" id="CP000655">
    <property type="protein sequence ID" value="ABP34677.1"/>
    <property type="molecule type" value="Genomic_DNA"/>
</dbReference>
<dbReference type="KEGG" id="pnu:Pnuc_1463"/>
<dbReference type="eggNOG" id="COG3158">
    <property type="taxonomic scope" value="Bacteria"/>
</dbReference>
<dbReference type="HOGENOM" id="CLU_008142_4_2_4"/>
<dbReference type="Proteomes" id="UP000000231">
    <property type="component" value="Chromosome"/>
</dbReference>
<dbReference type="GO" id="GO:0005886">
    <property type="term" value="C:plasma membrane"/>
    <property type="evidence" value="ECO:0007669"/>
    <property type="project" value="UniProtKB-SubCell"/>
</dbReference>
<dbReference type="GO" id="GO:0015079">
    <property type="term" value="F:potassium ion transmembrane transporter activity"/>
    <property type="evidence" value="ECO:0007669"/>
    <property type="project" value="UniProtKB-UniRule"/>
</dbReference>
<dbReference type="GO" id="GO:0015293">
    <property type="term" value="F:symporter activity"/>
    <property type="evidence" value="ECO:0007669"/>
    <property type="project" value="UniProtKB-UniRule"/>
</dbReference>
<dbReference type="HAMAP" id="MF_01522">
    <property type="entry name" value="Kup"/>
    <property type="match status" value="1"/>
</dbReference>
<dbReference type="InterPro" id="IPR003855">
    <property type="entry name" value="K+_transporter"/>
</dbReference>
<dbReference type="InterPro" id="IPR053952">
    <property type="entry name" value="K_trans_C"/>
</dbReference>
<dbReference type="InterPro" id="IPR053951">
    <property type="entry name" value="K_trans_N"/>
</dbReference>
<dbReference type="InterPro" id="IPR023051">
    <property type="entry name" value="Kup"/>
</dbReference>
<dbReference type="PANTHER" id="PTHR30540:SF79">
    <property type="entry name" value="LOW AFFINITY POTASSIUM TRANSPORT SYSTEM PROTEIN KUP"/>
    <property type="match status" value="1"/>
</dbReference>
<dbReference type="PANTHER" id="PTHR30540">
    <property type="entry name" value="OSMOTIC STRESS POTASSIUM TRANSPORTER"/>
    <property type="match status" value="1"/>
</dbReference>
<dbReference type="Pfam" id="PF02705">
    <property type="entry name" value="K_trans"/>
    <property type="match status" value="1"/>
</dbReference>
<dbReference type="Pfam" id="PF22776">
    <property type="entry name" value="K_trans_C"/>
    <property type="match status" value="1"/>
</dbReference>
<comment type="function">
    <text evidence="1">Transport of potassium into the cell. Likely operates as a K(+):H(+) symporter.</text>
</comment>
<comment type="catalytic activity">
    <reaction evidence="1">
        <text>K(+)(in) + H(+)(in) = K(+)(out) + H(+)(out)</text>
        <dbReference type="Rhea" id="RHEA:28490"/>
        <dbReference type="ChEBI" id="CHEBI:15378"/>
        <dbReference type="ChEBI" id="CHEBI:29103"/>
    </reaction>
    <physiologicalReaction direction="right-to-left" evidence="1">
        <dbReference type="Rhea" id="RHEA:28492"/>
    </physiologicalReaction>
</comment>
<comment type="subcellular location">
    <subcellularLocation>
        <location evidence="1">Cell inner membrane</location>
        <topology evidence="1">Multi-pass membrane protein</topology>
    </subcellularLocation>
</comment>
<comment type="similarity">
    <text evidence="1">Belongs to the HAK/KUP transporter (TC 2.A.72) family.</text>
</comment>